<comment type="subcellular location">
    <subcellularLocation>
        <location evidence="1">Spore core</location>
    </subcellularLocation>
</comment>
<comment type="induction">
    <text evidence="1">Expressed only in the forespore compartment of sporulating cells.</text>
</comment>
<comment type="similarity">
    <text evidence="1">Belongs to the SspN family.</text>
</comment>
<feature type="chain" id="PRO_1000185027" description="Small, acid-soluble spore protein N">
    <location>
        <begin position="1"/>
        <end position="44"/>
    </location>
</feature>
<feature type="region of interest" description="Disordered" evidence="2">
    <location>
        <begin position="1"/>
        <end position="44"/>
    </location>
</feature>
<sequence>MGNPKKNSKDFAPNHIGTQSKKAGGNKGKQMQDQTGKQPIVDNG</sequence>
<protein>
    <recommendedName>
        <fullName evidence="1">Small, acid-soluble spore protein N</fullName>
        <shortName evidence="1">SASP N</shortName>
    </recommendedName>
</protein>
<proteinExistence type="inferred from homology"/>
<gene>
    <name evidence="1" type="primary">sspN</name>
    <name type="ordered locus">BAMEG_0964</name>
</gene>
<name>SSPN_BACAC</name>
<organism>
    <name type="scientific">Bacillus anthracis (strain CDC 684 / NRRL 3495)</name>
    <dbReference type="NCBI Taxonomy" id="568206"/>
    <lineage>
        <taxon>Bacteria</taxon>
        <taxon>Bacillati</taxon>
        <taxon>Bacillota</taxon>
        <taxon>Bacilli</taxon>
        <taxon>Bacillales</taxon>
        <taxon>Bacillaceae</taxon>
        <taxon>Bacillus</taxon>
        <taxon>Bacillus cereus group</taxon>
    </lineage>
</organism>
<keyword id="KW-0749">Sporulation</keyword>
<dbReference type="EMBL" id="CP001215">
    <property type="protein sequence ID" value="ACP13186.1"/>
    <property type="molecule type" value="Genomic_DNA"/>
</dbReference>
<dbReference type="RefSeq" id="WP_000527987.1">
    <property type="nucleotide sequence ID" value="NC_012581.1"/>
</dbReference>
<dbReference type="GeneID" id="93007574"/>
<dbReference type="KEGG" id="bah:BAMEG_0964"/>
<dbReference type="HOGENOM" id="CLU_216714_0_0_9"/>
<dbReference type="GO" id="GO:0042601">
    <property type="term" value="C:endospore-forming forespore"/>
    <property type="evidence" value="ECO:0007669"/>
    <property type="project" value="InterPro"/>
</dbReference>
<dbReference type="GO" id="GO:0030436">
    <property type="term" value="P:asexual sporulation"/>
    <property type="evidence" value="ECO:0007669"/>
    <property type="project" value="UniProtKB-UniRule"/>
</dbReference>
<dbReference type="GO" id="GO:0030435">
    <property type="term" value="P:sporulation resulting in formation of a cellular spore"/>
    <property type="evidence" value="ECO:0007669"/>
    <property type="project" value="UniProtKB-KW"/>
</dbReference>
<dbReference type="HAMAP" id="MF_01505">
    <property type="entry name" value="SspN"/>
    <property type="match status" value="1"/>
</dbReference>
<dbReference type="InterPro" id="IPR012612">
    <property type="entry name" value="SASP_SspN"/>
</dbReference>
<dbReference type="NCBIfam" id="NF006904">
    <property type="entry name" value="PRK09398.1"/>
    <property type="match status" value="1"/>
</dbReference>
<dbReference type="Pfam" id="PF08177">
    <property type="entry name" value="SspN"/>
    <property type="match status" value="1"/>
</dbReference>
<reference key="1">
    <citation type="submission" date="2008-10" db="EMBL/GenBank/DDBJ databases">
        <title>Genome sequence of Bacillus anthracis str. CDC 684.</title>
        <authorList>
            <person name="Dodson R.J."/>
            <person name="Munk A.C."/>
            <person name="Brettin T."/>
            <person name="Bruce D."/>
            <person name="Detter C."/>
            <person name="Tapia R."/>
            <person name="Han C."/>
            <person name="Sutton G."/>
            <person name="Sims D."/>
        </authorList>
    </citation>
    <scope>NUCLEOTIDE SEQUENCE [LARGE SCALE GENOMIC DNA]</scope>
    <source>
        <strain>CDC 684 / NRRL 3495</strain>
    </source>
</reference>
<accession>C3L9C4</accession>
<evidence type="ECO:0000255" key="1">
    <source>
        <dbReference type="HAMAP-Rule" id="MF_01505"/>
    </source>
</evidence>
<evidence type="ECO:0000256" key="2">
    <source>
        <dbReference type="SAM" id="MobiDB-lite"/>
    </source>
</evidence>